<name>KINH_CAEEL</name>
<evidence type="ECO:0000255" key="1"/>
<evidence type="ECO:0000255" key="2">
    <source>
        <dbReference type="PROSITE-ProRule" id="PRU00283"/>
    </source>
</evidence>
<evidence type="ECO:0000256" key="3">
    <source>
        <dbReference type="SAM" id="MobiDB-lite"/>
    </source>
</evidence>
<evidence type="ECO:0000269" key="4">
    <source>
    </source>
</evidence>
<evidence type="ECO:0000269" key="5">
    <source>
    </source>
</evidence>
<evidence type="ECO:0000269" key="6">
    <source>
    </source>
</evidence>
<evidence type="ECO:0000269" key="7">
    <source>
    </source>
</evidence>
<evidence type="ECO:0000269" key="8">
    <source>
    </source>
</evidence>
<evidence type="ECO:0000269" key="9">
    <source>
    </source>
</evidence>
<evidence type="ECO:0000269" key="10">
    <source>
    </source>
</evidence>
<evidence type="ECO:0000305" key="11"/>
<evidence type="ECO:0000312" key="12">
    <source>
        <dbReference type="WormBase" id="R05D3.7"/>
    </source>
</evidence>
<keyword id="KW-0067">ATP-binding</keyword>
<keyword id="KW-0175">Coiled coil</keyword>
<keyword id="KW-0963">Cytoplasm</keyword>
<keyword id="KW-0206">Cytoskeleton</keyword>
<keyword id="KW-0493">Microtubule</keyword>
<keyword id="KW-0505">Motor protein</keyword>
<keyword id="KW-0547">Nucleotide-binding</keyword>
<keyword id="KW-1185">Reference proteome</keyword>
<keyword id="KW-0813">Transport</keyword>
<organism>
    <name type="scientific">Caenorhabditis elegans</name>
    <dbReference type="NCBI Taxonomy" id="6239"/>
    <lineage>
        <taxon>Eukaryota</taxon>
        <taxon>Metazoa</taxon>
        <taxon>Ecdysozoa</taxon>
        <taxon>Nematoda</taxon>
        <taxon>Chromadorea</taxon>
        <taxon>Rhabditida</taxon>
        <taxon>Rhabditina</taxon>
        <taxon>Rhabditomorpha</taxon>
        <taxon>Rhabditoidea</taxon>
        <taxon>Rhabditidae</taxon>
        <taxon>Peloderinae</taxon>
        <taxon>Caenorhabditis</taxon>
    </lineage>
</organism>
<accession>P34540</accession>
<comment type="function">
    <text evidence="4 5 6 7 8 9 10">Microtubule-dependent motor protein required for organelle transport (PubMed:22634595, PubMed:30254025). Plays a role in endosome transport (PubMed:22634595). Required for the transport of mitochondria along the axon of motor neurons (PubMed:30254025). Involved in the nuclear migration of hyp7 hypodermal precursor cells (PubMed:19605495, PubMed:27697906). Required for the formation of dendritic branches of PVD sensory neurons (PubMed:21205795). In non-ciliated neurons such as the PVD and PHC neurons, required for the organization of minus-end out microtubules in dendrites (PubMed:30254025). Also required for the minus-end out orientation of microtubules in dendrites of AQR gas-sensing neurons (PubMed:33460640). Involved in the localization of unc-33 to neurites (PubMed:16236031). Positively regulates cilium position and dendrite morphogenesis in the postembryonic AQR and PQR gas-sensing neurons (PubMed:33460640). Plays a more prominent role in regulating dendrite morphogenesis in AQR than in PQR neurons (PubMed:33460640). Plays a role in regulating the localization of grdn-1 to the distal dendrites of AQR sensory neurons (PubMed:33460640).</text>
</comment>
<comment type="subunit">
    <text>Oligomer composed of two heavy chains and two light chains.</text>
</comment>
<comment type="subcellular location">
    <subcellularLocation>
        <location evidence="11">Cytoplasm</location>
        <location evidence="11">Cytoskeleton</location>
    </subcellularLocation>
    <subcellularLocation>
        <location evidence="5">Cytoplasm</location>
    </subcellularLocation>
</comment>
<comment type="domain">
    <text>Composed of three structural domains: a large globular N-terminal domain which is responsible for the motor activity of kinesin (it hydrolyzes ATP and binds microtubule), a central alpha-helical coiled coil domain that mediates the heavy chain dimerization; and a small globular C-terminal domain which interacts with other proteins (such as the kinesin light chains), vesicles and membranous organelles.</text>
</comment>
<comment type="disruption phenotype">
    <text evidence="6 7 8 9">Conditional knockout in PVD neuron results in a complete microtubule polarity reversal in the anterior dendrite (PubMed:30254025). Conditional knockout in motor neuron reduces the number of mitochondria in the axon (PubMed:30254025). RNAi-mediated knockdown results in reduced dendritic branch formation in PVD sensory neurons (PubMed:21205795). RNAi-mediated knockdown results in an altered distribution of recycling and late endosomes (PubMed:22634595). RNAi-mediated knockdown results in defects in nuclear migration in hyp7 hypodermal precursor cells (PubMed:27697906). RNAi-mediated knockdown in a dhc-1 (js319) mutant background results in defective nuclei migrations in larval hypodermal P-cells (PubMed:27697906).</text>
</comment>
<comment type="similarity">
    <text evidence="2">Belongs to the TRAFAC class myosin-kinesin ATPase superfamily. Kinesin family. Kinesin subfamily.</text>
</comment>
<proteinExistence type="evidence at transcript level"/>
<sequence length="815" mass="91894">MEPRTDGAECGVQVFCRIRPLNKTEEKNADRFLPKFPSEDSISLGGKVYVFDKVFKPNTTQEQVYKGAAYHIVQDVLSGYNGTVFAYGQTSSGKTHTMEGVIGDNGLSGIIPRIVADIFNHIYSMDENLQFHIKVSYYEIYNEKIRDLLDPEKVNLSIHEDKNRVPYVKGATERFVGGPDEVLQAIEDGKSNRMVAVTNMNEHSSRSHSVFLITVKQEHQTTKKQLTGKLYLVDLAGSEKVSKTGAQGTVLEEAKNINKSLTALGIVISALAEGTKSHVPYRDSKLTRILQESLGGNSRTTVIICASPSHFNEAETKSTLLFGARAKTIKNVVQINEELTAEEWKRRYEKEKEKNTRLAALLQAAALELSRWRAGESVSEVEWVNLSDSAQMAVSEVSGGSTPLMERSIAPAPPMLTSTTGPITDEEKKKYEEERVKLYQQLDEKDDEIQKVSQELEKLRQQVLLQEEALGTMRENEELIREENNRFQKEAEDKQQEGKEMMTALEEIAVNLDVRQAECEKLKRELEVVQEDNQSLEDRMNQATSLLNAHLDECGPKIRHFKEGIYNVIREFNIADIASQNDQLPDHDLLNHVRIGVSKLFSEYSAAKESSTAAEHDAEAKLAADVARVESGQDAGRMKQLLVKDQAAKEIKPLTDRVNMELTTLKNLKKEFMRVLVARCQANQDTEGEDSLSGPAQKQRIQFLENNLDKLTKVHKQLVRDNADLRVELPKMEARLRGREDRIKILETALRDSKQRSQAERKKYQQEVERIKEAVRQRNMRRMNAPQIVKPIRPGQVYTSPSAGMSQGAPNGSNA</sequence>
<gene>
    <name evidence="12" type="primary">unc-116</name>
    <name evidence="12" type="synonym">khc-1</name>
    <name evidence="12" type="ORF">R05D3.7</name>
</gene>
<dbReference type="EMBL" id="AB017163">
    <property type="protein sequence ID" value="BAA32594.1"/>
    <property type="molecule type" value="mRNA"/>
</dbReference>
<dbReference type="EMBL" id="L19120">
    <property type="protein sequence ID" value="AAA28155.1"/>
    <property type="molecule type" value="Genomic_DNA"/>
</dbReference>
<dbReference type="EMBL" id="BX284603">
    <property type="protein sequence ID" value="CCD73193.1"/>
    <property type="molecule type" value="Genomic_DNA"/>
</dbReference>
<dbReference type="PIR" id="S44868">
    <property type="entry name" value="S44868"/>
</dbReference>
<dbReference type="RefSeq" id="NP_001370811.1">
    <property type="nucleotide sequence ID" value="NM_001382938.2"/>
</dbReference>
<dbReference type="RefSeq" id="NP_498842.1">
    <property type="nucleotide sequence ID" value="NM_066441.6"/>
</dbReference>
<dbReference type="SMR" id="P34540"/>
<dbReference type="BioGRID" id="41383">
    <property type="interactions" value="13"/>
</dbReference>
<dbReference type="ComplexPortal" id="CPX-1390">
    <property type="entry name" value="Kinesin I motor complex, klc-2 variant"/>
</dbReference>
<dbReference type="ComplexPortal" id="CPX-1416">
    <property type="entry name" value="Kinesin I motor complex, klc-1 variant"/>
</dbReference>
<dbReference type="FunCoup" id="P34540">
    <property type="interactions" value="2474"/>
</dbReference>
<dbReference type="IntAct" id="P34540">
    <property type="interactions" value="3"/>
</dbReference>
<dbReference type="STRING" id="6239.R05D3.7.1"/>
<dbReference type="iPTMnet" id="P34540"/>
<dbReference type="PaxDb" id="6239-R05D3.7"/>
<dbReference type="PeptideAtlas" id="P34540"/>
<dbReference type="EnsemblMetazoa" id="R05D3.7.1">
    <property type="protein sequence ID" value="R05D3.7.1"/>
    <property type="gene ID" value="WBGene00006840"/>
</dbReference>
<dbReference type="GeneID" id="176179"/>
<dbReference type="UCSC" id="R05D3.7">
    <property type="organism name" value="c. elegans"/>
</dbReference>
<dbReference type="AGR" id="WB:WBGene00006840"/>
<dbReference type="WormBase" id="R05D3.7">
    <property type="protein sequence ID" value="CE26945"/>
    <property type="gene ID" value="WBGene00006840"/>
    <property type="gene designation" value="unc-116"/>
</dbReference>
<dbReference type="eggNOG" id="KOG0240">
    <property type="taxonomic scope" value="Eukaryota"/>
</dbReference>
<dbReference type="GeneTree" id="ENSGT00940000175167"/>
<dbReference type="HOGENOM" id="CLU_001485_11_1_1"/>
<dbReference type="InParanoid" id="P34540"/>
<dbReference type="OMA" id="DSKSREC"/>
<dbReference type="OrthoDB" id="3176171at2759"/>
<dbReference type="PhylomeDB" id="P34540"/>
<dbReference type="Reactome" id="R-CEL-6811434">
    <property type="pathway name" value="COPI-dependent Golgi-to-ER retrograde traffic"/>
</dbReference>
<dbReference type="Reactome" id="R-CEL-983189">
    <property type="pathway name" value="Kinesins"/>
</dbReference>
<dbReference type="PRO" id="PR:P34540"/>
<dbReference type="Proteomes" id="UP000001940">
    <property type="component" value="Chromosome III"/>
</dbReference>
<dbReference type="Bgee" id="WBGene00006840">
    <property type="expression patterns" value="Expressed in pharyngeal muscle cell (C elegans) and 4 other cell types or tissues"/>
</dbReference>
<dbReference type="GO" id="GO:1904115">
    <property type="term" value="C:axon cytoplasm"/>
    <property type="evidence" value="ECO:0007669"/>
    <property type="project" value="GOC"/>
</dbReference>
<dbReference type="GO" id="GO:0005737">
    <property type="term" value="C:cytoplasm"/>
    <property type="evidence" value="ECO:0000314"/>
    <property type="project" value="WormBase"/>
</dbReference>
<dbReference type="GO" id="GO:0032839">
    <property type="term" value="C:dendrite cytoplasm"/>
    <property type="evidence" value="ECO:0007669"/>
    <property type="project" value="GOC"/>
</dbReference>
<dbReference type="GO" id="GO:0005871">
    <property type="term" value="C:kinesin complex"/>
    <property type="evidence" value="ECO:0000318"/>
    <property type="project" value="GO_Central"/>
</dbReference>
<dbReference type="GO" id="GO:0016938">
    <property type="term" value="C:kinesin I complex"/>
    <property type="evidence" value="ECO:0000353"/>
    <property type="project" value="WormBase"/>
</dbReference>
<dbReference type="GO" id="GO:0005874">
    <property type="term" value="C:microtubule"/>
    <property type="evidence" value="ECO:0000318"/>
    <property type="project" value="GO_Central"/>
</dbReference>
<dbReference type="GO" id="GO:0043005">
    <property type="term" value="C:neuron projection"/>
    <property type="evidence" value="ECO:0000314"/>
    <property type="project" value="WormBase"/>
</dbReference>
<dbReference type="GO" id="GO:0005635">
    <property type="term" value="C:nuclear envelope"/>
    <property type="evidence" value="ECO:0000314"/>
    <property type="project" value="WormBase"/>
</dbReference>
<dbReference type="GO" id="GO:0045202">
    <property type="term" value="C:synapse"/>
    <property type="evidence" value="ECO:0000314"/>
    <property type="project" value="WormBase"/>
</dbReference>
<dbReference type="GO" id="GO:0005524">
    <property type="term" value="F:ATP binding"/>
    <property type="evidence" value="ECO:0007669"/>
    <property type="project" value="UniProtKB-KW"/>
</dbReference>
<dbReference type="GO" id="GO:0016887">
    <property type="term" value="F:ATP hydrolysis activity"/>
    <property type="evidence" value="ECO:0000318"/>
    <property type="project" value="GO_Central"/>
</dbReference>
<dbReference type="GO" id="GO:0008017">
    <property type="term" value="F:microtubule binding"/>
    <property type="evidence" value="ECO:0000318"/>
    <property type="project" value="GO_Central"/>
</dbReference>
<dbReference type="GO" id="GO:0008574">
    <property type="term" value="F:plus-end-directed microtubule motor activity"/>
    <property type="evidence" value="ECO:0000314"/>
    <property type="project" value="WormBase"/>
</dbReference>
<dbReference type="GO" id="GO:0098957">
    <property type="term" value="P:anterograde axonal transport of mitochondrion"/>
    <property type="evidence" value="ECO:0000315"/>
    <property type="project" value="UniProtKB"/>
</dbReference>
<dbReference type="GO" id="GO:0098971">
    <property type="term" value="P:anterograde dendritic transport of neurotransmitter receptor complex"/>
    <property type="evidence" value="ECO:0000318"/>
    <property type="project" value="GO_Central"/>
</dbReference>
<dbReference type="GO" id="GO:0007411">
    <property type="term" value="P:axon guidance"/>
    <property type="evidence" value="ECO:0000318"/>
    <property type="project" value="GO_Central"/>
</dbReference>
<dbReference type="GO" id="GO:0009792">
    <property type="term" value="P:embryo development ending in birth or egg hatching"/>
    <property type="evidence" value="ECO:0000315"/>
    <property type="project" value="WormBase"/>
</dbReference>
<dbReference type="GO" id="GO:0051295">
    <property type="term" value="P:establishment of meiotic spindle localization"/>
    <property type="evidence" value="ECO:0000315"/>
    <property type="project" value="WormBase"/>
</dbReference>
<dbReference type="GO" id="GO:0051296">
    <property type="term" value="P:establishment of meiotic spindle orientation"/>
    <property type="evidence" value="ECO:0000315"/>
    <property type="project" value="WormBase"/>
</dbReference>
<dbReference type="GO" id="GO:0030951">
    <property type="term" value="P:establishment or maintenance of microtubule cytoskeleton polarity"/>
    <property type="evidence" value="ECO:0000315"/>
    <property type="project" value="UniProtKB"/>
</dbReference>
<dbReference type="GO" id="GO:0040011">
    <property type="term" value="P:locomotion"/>
    <property type="evidence" value="ECO:0000315"/>
    <property type="project" value="WormBase"/>
</dbReference>
<dbReference type="GO" id="GO:0033206">
    <property type="term" value="P:meiotic cytokinesis"/>
    <property type="evidence" value="ECO:0000315"/>
    <property type="project" value="WormBase"/>
</dbReference>
<dbReference type="GO" id="GO:0070266">
    <property type="term" value="P:necroptotic process"/>
    <property type="evidence" value="ECO:0000316"/>
    <property type="project" value="WormBase"/>
</dbReference>
<dbReference type="GO" id="GO:0030473">
    <property type="term" value="P:nuclear migration along microtubule"/>
    <property type="evidence" value="ECO:0000315"/>
    <property type="project" value="UniProtKB"/>
</dbReference>
<dbReference type="GO" id="GO:0040038">
    <property type="term" value="P:polar body extrusion after meiotic divisions"/>
    <property type="evidence" value="ECO:0000315"/>
    <property type="project" value="WormBase"/>
</dbReference>
<dbReference type="GO" id="GO:0045724">
    <property type="term" value="P:positive regulation of cilium assembly"/>
    <property type="evidence" value="ECO:0000315"/>
    <property type="project" value="UniProtKB"/>
</dbReference>
<dbReference type="GO" id="GO:0050775">
    <property type="term" value="P:positive regulation of dendrite morphogenesis"/>
    <property type="evidence" value="ECO:0000315"/>
    <property type="project" value="UniProtKB"/>
</dbReference>
<dbReference type="GO" id="GO:0008104">
    <property type="term" value="P:protein localization"/>
    <property type="evidence" value="ECO:0000315"/>
    <property type="project" value="ComplexPortal"/>
</dbReference>
<dbReference type="GO" id="GO:0048814">
    <property type="term" value="P:regulation of dendrite morphogenesis"/>
    <property type="evidence" value="ECO:0000315"/>
    <property type="project" value="WormBase"/>
</dbReference>
<dbReference type="GO" id="GO:0048489">
    <property type="term" value="P:synaptic vesicle transport"/>
    <property type="evidence" value="ECO:0000315"/>
    <property type="project" value="WormBase"/>
</dbReference>
<dbReference type="CDD" id="cd23649">
    <property type="entry name" value="Khc_CBD_cc"/>
    <property type="match status" value="1"/>
</dbReference>
<dbReference type="CDD" id="cd01369">
    <property type="entry name" value="KISc_KHC_KIF5"/>
    <property type="match status" value="1"/>
</dbReference>
<dbReference type="FunFam" id="3.40.850.10:FF:000067">
    <property type="entry name" value="Kinesin-like protein"/>
    <property type="match status" value="1"/>
</dbReference>
<dbReference type="Gene3D" id="6.10.250.1590">
    <property type="match status" value="1"/>
</dbReference>
<dbReference type="Gene3D" id="3.40.850.10">
    <property type="entry name" value="Kinesin motor domain"/>
    <property type="match status" value="1"/>
</dbReference>
<dbReference type="InterPro" id="IPR027640">
    <property type="entry name" value="Kinesin-like_fam"/>
</dbReference>
<dbReference type="InterPro" id="IPR019821">
    <property type="entry name" value="Kinesin_motor_CS"/>
</dbReference>
<dbReference type="InterPro" id="IPR001752">
    <property type="entry name" value="Kinesin_motor_dom"/>
</dbReference>
<dbReference type="InterPro" id="IPR036961">
    <property type="entry name" value="Kinesin_motor_dom_sf"/>
</dbReference>
<dbReference type="InterPro" id="IPR027417">
    <property type="entry name" value="P-loop_NTPase"/>
</dbReference>
<dbReference type="PANTHER" id="PTHR47968">
    <property type="entry name" value="CENTROMERE PROTEIN E"/>
    <property type="match status" value="1"/>
</dbReference>
<dbReference type="PANTHER" id="PTHR47968:SF36">
    <property type="entry name" value="KINESIN HEAVY CHAIN ISOFORM X1"/>
    <property type="match status" value="1"/>
</dbReference>
<dbReference type="Pfam" id="PF00225">
    <property type="entry name" value="Kinesin"/>
    <property type="match status" value="1"/>
</dbReference>
<dbReference type="PRINTS" id="PR00380">
    <property type="entry name" value="KINESINHEAVY"/>
</dbReference>
<dbReference type="SMART" id="SM00129">
    <property type="entry name" value="KISc"/>
    <property type="match status" value="1"/>
</dbReference>
<dbReference type="SUPFAM" id="SSF52540">
    <property type="entry name" value="P-loop containing nucleoside triphosphate hydrolases"/>
    <property type="match status" value="1"/>
</dbReference>
<dbReference type="PROSITE" id="PS00411">
    <property type="entry name" value="KINESIN_MOTOR_1"/>
    <property type="match status" value="1"/>
</dbReference>
<dbReference type="PROSITE" id="PS50067">
    <property type="entry name" value="KINESIN_MOTOR_2"/>
    <property type="match status" value="1"/>
</dbReference>
<feature type="chain" id="PRO_0000125349" description="Kinesin heavy chain">
    <location>
        <begin position="1"/>
        <end position="815"/>
    </location>
</feature>
<feature type="domain" description="Kinesin motor" evidence="2">
    <location>
        <begin position="11"/>
        <end position="329"/>
    </location>
</feature>
<feature type="region of interest" description="Disordered" evidence="3">
    <location>
        <begin position="788"/>
        <end position="815"/>
    </location>
</feature>
<feature type="coiled-coil region" evidence="1">
    <location>
        <begin position="335"/>
        <end position="374"/>
    </location>
</feature>
<feature type="coiled-coil region" evidence="1">
    <location>
        <begin position="422"/>
        <end position="554"/>
    </location>
</feature>
<feature type="coiled-coil region" evidence="1">
    <location>
        <begin position="695"/>
        <end position="785"/>
    </location>
</feature>
<feature type="compositionally biased region" description="Polar residues" evidence="3">
    <location>
        <begin position="797"/>
        <end position="815"/>
    </location>
</feature>
<feature type="binding site" evidence="2">
    <location>
        <begin position="88"/>
        <end position="95"/>
    </location>
    <ligand>
        <name>ATP</name>
        <dbReference type="ChEBI" id="CHEBI:30616"/>
    </ligand>
</feature>
<protein>
    <recommendedName>
        <fullName>Kinesin heavy chain</fullName>
    </recommendedName>
    <alternativeName>
        <fullName>Uncoordinated protein 116</fullName>
        <shortName>Protein unc-116</shortName>
    </alternativeName>
</protein>
<reference key="1">
    <citation type="journal article" date="1993" name="Proc. Natl. Acad. Sci. U.S.A.">
        <title>Cloning by insertional mutagenesis of a cDNA encoding Caenorhabditis elegans kinesin heavy chain.</title>
        <authorList>
            <person name="Patel N."/>
            <person name="Thierry-Mieg D."/>
            <person name="Mancillas J.R."/>
        </authorList>
    </citation>
    <scope>NUCLEOTIDE SEQUENCE [MRNA]</scope>
    <source>
        <strain>Bristol N2</strain>
    </source>
</reference>
<reference key="2">
    <citation type="submission" date="1998-08" db="EMBL/GenBank/DDBJ databases">
        <authorList>
            <person name="Siddiqui S.S."/>
            <person name="Ali M.Y."/>
            <person name="Khan M.A."/>
        </authorList>
    </citation>
    <scope>NUCLEOTIDE SEQUENCE [GENOMIC DNA]</scope>
</reference>
<reference key="3">
    <citation type="journal article" date="1994" name="Nature">
        <title>2.2 Mb of contiguous nucleotide sequence from chromosome III of C. elegans.</title>
        <authorList>
            <person name="Wilson R."/>
            <person name="Ainscough R."/>
            <person name="Anderson K."/>
            <person name="Baynes C."/>
            <person name="Berks M."/>
            <person name="Bonfield J."/>
            <person name="Burton J."/>
            <person name="Connell M."/>
            <person name="Copsey T."/>
            <person name="Cooper J."/>
            <person name="Coulson A."/>
            <person name="Craxton M."/>
            <person name="Dear S."/>
            <person name="Du Z."/>
            <person name="Durbin R."/>
            <person name="Favello A."/>
            <person name="Fraser A."/>
            <person name="Fulton L."/>
            <person name="Gardner A."/>
            <person name="Green P."/>
            <person name="Hawkins T."/>
            <person name="Hillier L."/>
            <person name="Jier M."/>
            <person name="Johnston L."/>
            <person name="Jones M."/>
            <person name="Kershaw J."/>
            <person name="Kirsten J."/>
            <person name="Laisster N."/>
            <person name="Latreille P."/>
            <person name="Lightning J."/>
            <person name="Lloyd C."/>
            <person name="Mortimore B."/>
            <person name="O'Callaghan M."/>
            <person name="Parsons J."/>
            <person name="Percy C."/>
            <person name="Rifken L."/>
            <person name="Roopra A."/>
            <person name="Saunders D."/>
            <person name="Shownkeen R."/>
            <person name="Sims M."/>
            <person name="Smaldon N."/>
            <person name="Smith A."/>
            <person name="Smith M."/>
            <person name="Sonnhammer E."/>
            <person name="Staden R."/>
            <person name="Sulston J."/>
            <person name="Thierry-Mieg J."/>
            <person name="Thomas K."/>
            <person name="Vaudin M."/>
            <person name="Vaughan K."/>
            <person name="Waterston R."/>
            <person name="Watson A."/>
            <person name="Weinstock L."/>
            <person name="Wilkinson-Sproat J."/>
            <person name="Wohldman P."/>
        </authorList>
    </citation>
    <scope>NUCLEOTIDE SEQUENCE [LARGE SCALE GENOMIC DNA]</scope>
    <source>
        <strain>Bristol N2</strain>
    </source>
</reference>
<reference key="4">
    <citation type="journal article" date="1998" name="Science">
        <title>Genome sequence of the nematode C. elegans: a platform for investigating biology.</title>
        <authorList>
            <consortium name="The C. elegans sequencing consortium"/>
        </authorList>
    </citation>
    <scope>NUCLEOTIDE SEQUENCE [LARGE SCALE GENOMIC DNA]</scope>
    <source>
        <strain>Bristol N2</strain>
    </source>
</reference>
<reference key="5">
    <citation type="journal article" date="2005" name="J. Neurochem.">
        <title>Regulatory machinery of UNC-33 Ce-CRMP localization in neurites during neuronal development in Caenorhabditis elegans.</title>
        <authorList>
            <person name="Tsuboi D."/>
            <person name="Hikita T."/>
            <person name="Qadota H."/>
            <person name="Amano M."/>
            <person name="Kaibuchi K."/>
        </authorList>
    </citation>
    <scope>FUNCTION</scope>
</reference>
<reference key="6">
    <citation type="journal article" date="2009" name="Development">
        <title>UNC-83 is a nuclear-specific cargo adaptor for kinesin-1-mediated nuclear migration.</title>
        <authorList>
            <person name="Meyerzon M."/>
            <person name="Fridolfsson H.N."/>
            <person name="Ly N."/>
            <person name="McNally F.J."/>
            <person name="Starr D.A."/>
        </authorList>
    </citation>
    <scope>FUNCTION</scope>
    <scope>SUBCELLULAR LOCATION</scope>
</reference>
<reference key="7">
    <citation type="journal article" date="2011" name="Development">
        <title>C. elegans bicd-1, homolog of the Drosophila dynein accessory factor Bicaudal D, regulates the branching of PVD sensory neuron dendrites.</title>
        <authorList>
            <person name="Aguirre-Chen C."/>
            <person name="Buelow H.E."/>
            <person name="Kaprielian Z."/>
        </authorList>
    </citation>
    <scope>FUNCTION</scope>
    <scope>DISRUPTION PHENOTYPE</scope>
</reference>
<reference key="8">
    <citation type="journal article" date="2012" name="Nat. Cell Biol.">
        <title>Caenorhabditis elegans screen reveals role of PAR-5 in RAB-11-recycling endosome positioning and apicobasal cell polarity.</title>
        <authorList>
            <person name="Winter J.F."/>
            <person name="Hoepfner S."/>
            <person name="Korn K."/>
            <person name="Farnung B.O."/>
            <person name="Bradshaw C.R."/>
            <person name="Marsico G."/>
            <person name="Volkmer M."/>
            <person name="Habermann B."/>
            <person name="Zerial M."/>
        </authorList>
    </citation>
    <scope>FUNCTION</scope>
    <scope>DISRUPTION PHENOTYPE</scope>
</reference>
<reference key="9">
    <citation type="journal article" date="2016" name="Development">
        <title>Nuclei migrate through constricted spaces using microtubule motors and actin networks in C. elegans hypodermal cells.</title>
        <authorList>
            <person name="Bone C.R."/>
            <person name="Chang Y.T."/>
            <person name="Cain N.E."/>
            <person name="Murphy S.P."/>
            <person name="Starr D.A."/>
        </authorList>
    </citation>
    <scope>FUNCTION</scope>
    <scope>DISRUPTION PHENOTYPE</scope>
</reference>
<reference key="10">
    <citation type="journal article" date="2018" name="J. Cell Sci.">
        <title>Local microtubule organization promotes cargo transport in C. elegans dendrites.</title>
        <authorList>
            <person name="Harterink M."/>
            <person name="Edwards S.L."/>
            <person name="de Haan B."/>
            <person name="Yau K.W."/>
            <person name="van den Heuvel S."/>
            <person name="Kapitein L.C."/>
            <person name="Miller K.G."/>
            <person name="Hoogenraad C.C."/>
        </authorList>
    </citation>
    <scope>FUNCTION</scope>
    <scope>DISRUPTION PHENOTYPE</scope>
</reference>
<reference key="11">
    <citation type="journal article" date="2021" name="Dev. Biol.">
        <title>GRDN-1/Girdin regulates dendrite morphogenesis and cilium position in two specialized sensory neuron types in C. elegans.</title>
        <authorList>
            <person name="Nechipurenko I."/>
            <person name="Lavrentyeva S."/>
            <person name="Sengupta P."/>
        </authorList>
    </citation>
    <scope>FUNCTION</scope>
</reference>